<protein>
    <recommendedName>
        <fullName>Fibrinogen-like protein 1</fullName>
    </recommendedName>
    <alternativeName>
        <fullName evidence="7">Fibrinogen-related protein 1</fullName>
        <shortName evidence="7">Mfrep-1</shortName>
    </alternativeName>
    <alternativeName>
        <fullName evidence="7">Liver fibrinogen-related protein-1</fullName>
        <shortName evidence="7">Mfire-1</shortName>
    </alternativeName>
</protein>
<sequence length="314" mass="36439">MGKIYSFVLVAIALMMGREGWALESESCLREQVRLRAQVHQLETRVKQQQTMIAQLLHEKEVQFLDKGSENSFIDLGGKRQYADCSEIYNDGFKQSGFYKIKPLQSLAEFSVYCDMSDGGGWTVIQRRSDGSENFNRGWNDYENGFGNFVQNNGEYWLGNKNINLLTIQGDYTLKIDLTDFEKNSSFAQYQSFKVGDKKSFYELNIGEYSGTAGDSLSGTFHPEVQWWASHQRMKFSTWDRDNDNYQGNCAEEEQSGWWFNRCHSANLNGVYYRGSYRAETDNGVVWYTWHGWWYSLKSVVMKIRPSDFIPNII</sequence>
<gene>
    <name type="primary">Fgl1</name>
    <name evidence="7" type="synonym">Mfire1</name>
</gene>
<reference key="1">
    <citation type="journal article" date="2002" name="Cell Res.">
        <title>Cloning and characterization of a mouse liver-specific gene mfrep-1, up-regulated in liver regeneration.</title>
        <authorList>
            <person name="Yan J."/>
            <person name="Ying H."/>
            <person name="Gu F."/>
            <person name="He J."/>
            <person name="Li Y.L."/>
            <person name="Liu H.M."/>
            <person name="Xu Y.H."/>
        </authorList>
    </citation>
    <scope>NUCLEOTIDE SEQUENCE [MRNA]</scope>
    <scope>TISSUE SPECIFICITY</scope>
    <source>
        <strain>C57BL/6J</strain>
        <tissue>Liver</tissue>
    </source>
</reference>
<reference key="2">
    <citation type="journal article" date="2004" name="Genome Res.">
        <title>The status, quality, and expansion of the NIH full-length cDNA project: the Mammalian Gene Collection (MGC).</title>
        <authorList>
            <consortium name="The MGC Project Team"/>
        </authorList>
    </citation>
    <scope>NUCLEOTIDE SEQUENCE [LARGE SCALE MRNA]</scope>
    <source>
        <strain>FVB/N</strain>
        <tissue>Liver</tissue>
    </source>
</reference>
<reference key="3">
    <citation type="journal article" date="2010" name="Cell">
        <title>A tissue-specific atlas of mouse protein phosphorylation and expression.</title>
        <authorList>
            <person name="Huttlin E.L."/>
            <person name="Jedrychowski M.P."/>
            <person name="Elias J.E."/>
            <person name="Goswami T."/>
            <person name="Rad R."/>
            <person name="Beausoleil S.A."/>
            <person name="Villen J."/>
            <person name="Haas W."/>
            <person name="Sowa M.E."/>
            <person name="Gygi S.P."/>
        </authorList>
    </citation>
    <scope>IDENTIFICATION BY MASS SPECTROMETRY [LARGE SCALE ANALYSIS]</scope>
    <source>
        <tissue>Liver</tissue>
    </source>
</reference>
<reference key="4">
    <citation type="journal article" date="2013" name="PLoS ONE">
        <title>Targeted deletion of fibrinogen like protein 1 reveals a novel role in energy substrate utilization.</title>
        <authorList>
            <person name="Demchev V."/>
            <person name="Malana G."/>
            <person name="Vangala D."/>
            <person name="Stoll J."/>
            <person name="Desai A."/>
            <person name="Kang H.W."/>
            <person name="Li Y."/>
            <person name="Nayeb-Hashemi H."/>
            <person name="Niepel M."/>
            <person name="Cohen D.E."/>
            <person name="Ukomadu C."/>
        </authorList>
    </citation>
    <scope>DISRUPTION PHENOTYPE</scope>
    <scope>TISSUE SPECIFICITY</scope>
</reference>
<reference key="5">
    <citation type="journal article" date="2018" name="Cell">
        <title>Fibrinogen-like protein 1 is a major immune inhibitory ligand of LAG-3.</title>
        <authorList>
            <person name="Wang J."/>
            <person name="Sanmamed M.F."/>
            <person name="Datar I."/>
            <person name="Su T.T."/>
            <person name="Ji L."/>
            <person name="Sun J."/>
            <person name="Chen L."/>
            <person name="Chen Y."/>
            <person name="Zhu G."/>
            <person name="Yin W."/>
            <person name="Zheng L."/>
            <person name="Zhou T."/>
            <person name="Badri T."/>
            <person name="Yao S."/>
            <person name="Zhu S."/>
            <person name="Boto A."/>
            <person name="Sznol M."/>
            <person name="Melero I."/>
            <person name="Vignali D.A.A."/>
            <person name="Schalper K."/>
            <person name="Chen L."/>
        </authorList>
    </citation>
    <scope>FUNCTION</scope>
    <scope>INTERACTION WITH LAG3</scope>
    <scope>SUBCELLULAR LOCATION</scope>
    <scope>DISRUPTION PHENOTYPE</scope>
</reference>
<comment type="function">
    <text evidence="1 6">Immune suppressive molecule that inhibits antigen-specific T-cell activation by acting as a major ligand of LAG3 (PubMed:30580966). Responsible for LAG3 T-cell inhibitory function (PubMed:30580966). Binds LAG3 independently from MHC class II (MHC-II) (PubMed:30580966). Secreted by, and promotes growth of, hepatocytes (By similarity).</text>
</comment>
<comment type="subunit">
    <text evidence="1 6">Homodimer (By similarity). Interacts (via the Fibrinogen C-terminal domain) with LAG3 (via Ig-like domains 1 and 2) (PubMed:30580966).</text>
</comment>
<comment type="interaction">
    <interactant intactId="EBI-34579174">
        <id>Q71KU9</id>
    </interactant>
    <interactant intactId="EBI-34579174">
        <id>Q71KU9</id>
        <label>Fgl1</label>
    </interactant>
    <organismsDiffer>false</organismsDiffer>
    <experiments>2</experiments>
</comment>
<comment type="interaction">
    <interactant intactId="EBI-34579174">
        <id>Q71KU9</id>
    </interactant>
    <interactant intactId="EBI-34579204">
        <id>Q61790</id>
        <label>Lag3</label>
    </interactant>
    <organismsDiffer>false</organismsDiffer>
    <experiments>3</experiments>
</comment>
<comment type="interaction">
    <interactant intactId="EBI-34579174">
        <id>Q71KU9</id>
    </interactant>
    <interactant intactId="EBI-2830752">
        <id>P18627</id>
        <label>LAG3</label>
    </interactant>
    <organismsDiffer>true</organismsDiffer>
    <experiments>2</experiments>
</comment>
<comment type="subcellular location">
    <subcellularLocation>
        <location evidence="6">Secreted</location>
    </subcellularLocation>
    <text evidence="6">Secreted in the blood plasma.</text>
</comment>
<comment type="tissue specificity">
    <text evidence="4 5">Mainly expressed in liver (PubMed:12528893, PubMed:23483972). Also expressed in brown adipose tissue (PubMed:23483972).</text>
</comment>
<comment type="disruption phenotype">
    <text evidence="5 6">Mice develop normally but develop spontaneous autoimmune symptoms caused by T-cell activation in aged mice (PubMed:30580966). Mice also display slight metabolic defects: mice are heavier than wild type mates, have abnormal plasma lipid profiles, fasting hyperglycemia with enhanced gluconeogenesis and exhibit differences in white and brown adipose tissue morphology (PubMed:23483972).</text>
</comment>
<comment type="miscellaneous">
    <text evidence="6">Blockade of the FGL1-LAG-3 interaction using a monoclonal antibody stimulates tumor immunity and is therapeutic against established mouse tumors in a receptor-ligand interdependent manner.</text>
</comment>
<proteinExistence type="evidence at protein level"/>
<evidence type="ECO:0000250" key="1">
    <source>
        <dbReference type="UniProtKB" id="Q08830"/>
    </source>
</evidence>
<evidence type="ECO:0000255" key="2"/>
<evidence type="ECO:0000255" key="3">
    <source>
        <dbReference type="PROSITE-ProRule" id="PRU00739"/>
    </source>
</evidence>
<evidence type="ECO:0000269" key="4">
    <source>
    </source>
</evidence>
<evidence type="ECO:0000269" key="5">
    <source>
    </source>
</evidence>
<evidence type="ECO:0000269" key="6">
    <source>
    </source>
</evidence>
<evidence type="ECO:0000303" key="7">
    <source>
    </source>
</evidence>
<evidence type="ECO:0000305" key="8"/>
<keyword id="KW-1064">Adaptive immunity</keyword>
<keyword id="KW-0175">Coiled coil</keyword>
<keyword id="KW-1015">Disulfide bond</keyword>
<keyword id="KW-0391">Immunity</keyword>
<keyword id="KW-1185">Reference proteome</keyword>
<keyword id="KW-0964">Secreted</keyword>
<keyword id="KW-0732">Signal</keyword>
<feature type="signal peptide" evidence="1">
    <location>
        <begin position="1"/>
        <end position="22"/>
    </location>
</feature>
<feature type="chain" id="PRO_0000322979" description="Fibrinogen-like protein 1">
    <location>
        <begin position="23"/>
        <end position="314"/>
    </location>
</feature>
<feature type="domain" description="Fibrinogen C-terminal" evidence="3">
    <location>
        <begin position="76"/>
        <end position="308"/>
    </location>
</feature>
<feature type="coiled-coil region" evidence="2">
    <location>
        <begin position="28"/>
        <end position="62"/>
    </location>
</feature>
<feature type="disulfide bond" description="Interchain" evidence="3">
    <location>
        <position position="28"/>
    </location>
</feature>
<feature type="disulfide bond" evidence="3">
    <location>
        <begin position="85"/>
        <end position="114"/>
    </location>
</feature>
<feature type="disulfide bond" evidence="3">
    <location>
        <begin position="250"/>
        <end position="263"/>
    </location>
</feature>
<feature type="sequence conflict" description="In Ref. 1; AAQ05798." evidence="8" ref="1">
    <original>S</original>
    <variation>N</variation>
    <location>
        <position position="27"/>
    </location>
</feature>
<feature type="sequence conflict" description="In Ref. 1; AAQ05798." evidence="8" ref="1">
    <original>R</original>
    <variation>K</variation>
    <location>
        <position position="80"/>
    </location>
</feature>
<accession>Q71KU9</accession>
<accession>Q8VC25</accession>
<organism>
    <name type="scientific">Mus musculus</name>
    <name type="common">Mouse</name>
    <dbReference type="NCBI Taxonomy" id="10090"/>
    <lineage>
        <taxon>Eukaryota</taxon>
        <taxon>Metazoa</taxon>
        <taxon>Chordata</taxon>
        <taxon>Craniata</taxon>
        <taxon>Vertebrata</taxon>
        <taxon>Euteleostomi</taxon>
        <taxon>Mammalia</taxon>
        <taxon>Eutheria</taxon>
        <taxon>Euarchontoglires</taxon>
        <taxon>Glires</taxon>
        <taxon>Rodentia</taxon>
        <taxon>Myomorpha</taxon>
        <taxon>Muroidea</taxon>
        <taxon>Muridae</taxon>
        <taxon>Murinae</taxon>
        <taxon>Mus</taxon>
        <taxon>Mus</taxon>
    </lineage>
</organism>
<name>FGL1_MOUSE</name>
<dbReference type="EMBL" id="AF478470">
    <property type="protein sequence ID" value="AAQ05798.1"/>
    <property type="molecule type" value="mRNA"/>
</dbReference>
<dbReference type="EMBL" id="BC021946">
    <property type="protein sequence ID" value="AAH21946.1"/>
    <property type="molecule type" value="mRNA"/>
</dbReference>
<dbReference type="CCDS" id="CCDS22260.1"/>
<dbReference type="RefSeq" id="NP_663569.2">
    <property type="nucleotide sequence ID" value="NM_145594.2"/>
</dbReference>
<dbReference type="RefSeq" id="XP_011240489.1">
    <property type="nucleotide sequence ID" value="XM_011242187.1"/>
</dbReference>
<dbReference type="SMR" id="Q71KU9"/>
<dbReference type="FunCoup" id="Q71KU9">
    <property type="interactions" value="209"/>
</dbReference>
<dbReference type="IntAct" id="Q71KU9">
    <property type="interactions" value="2"/>
</dbReference>
<dbReference type="STRING" id="10090.ENSMUSP00000034003"/>
<dbReference type="iPTMnet" id="Q71KU9"/>
<dbReference type="PhosphoSitePlus" id="Q71KU9"/>
<dbReference type="CPTAC" id="non-CPTAC-3708"/>
<dbReference type="PaxDb" id="10090-ENSMUSP00000034003"/>
<dbReference type="ProteomicsDB" id="266840"/>
<dbReference type="DNASU" id="234199"/>
<dbReference type="GeneID" id="234199"/>
<dbReference type="KEGG" id="mmu:234199"/>
<dbReference type="UCSC" id="uc009lnp.2">
    <property type="organism name" value="mouse"/>
</dbReference>
<dbReference type="AGR" id="MGI:102795"/>
<dbReference type="CTD" id="2267"/>
<dbReference type="MGI" id="MGI:102795">
    <property type="gene designation" value="Fgl1"/>
</dbReference>
<dbReference type="eggNOG" id="KOG2579">
    <property type="taxonomic scope" value="Eukaryota"/>
</dbReference>
<dbReference type="InParanoid" id="Q71KU9"/>
<dbReference type="OrthoDB" id="7725475at2759"/>
<dbReference type="PhylomeDB" id="Q71KU9"/>
<dbReference type="TreeFam" id="TF336658"/>
<dbReference type="BioGRID-ORCS" id="234199">
    <property type="hits" value="3 hits in 78 CRISPR screens"/>
</dbReference>
<dbReference type="ChiTaRS" id="Fgl1">
    <property type="organism name" value="mouse"/>
</dbReference>
<dbReference type="PRO" id="PR:Q71KU9"/>
<dbReference type="Proteomes" id="UP000000589">
    <property type="component" value="Unplaced"/>
</dbReference>
<dbReference type="RNAct" id="Q71KU9">
    <property type="molecule type" value="protein"/>
</dbReference>
<dbReference type="GO" id="GO:0005576">
    <property type="term" value="C:extracellular region"/>
    <property type="evidence" value="ECO:0000314"/>
    <property type="project" value="UniProtKB"/>
</dbReference>
<dbReference type="GO" id="GO:0042802">
    <property type="term" value="F:identical protein binding"/>
    <property type="evidence" value="ECO:0000353"/>
    <property type="project" value="IntAct"/>
</dbReference>
<dbReference type="GO" id="GO:0002250">
    <property type="term" value="P:adaptive immune response"/>
    <property type="evidence" value="ECO:0007669"/>
    <property type="project" value="UniProtKB-KW"/>
</dbReference>
<dbReference type="GO" id="GO:0060612">
    <property type="term" value="P:adipose tissue development"/>
    <property type="evidence" value="ECO:0000315"/>
    <property type="project" value="MGI"/>
</dbReference>
<dbReference type="GO" id="GO:0007596">
    <property type="term" value="P:blood coagulation"/>
    <property type="evidence" value="ECO:0007669"/>
    <property type="project" value="InterPro"/>
</dbReference>
<dbReference type="GO" id="GO:0008203">
    <property type="term" value="P:cholesterol metabolic process"/>
    <property type="evidence" value="ECO:0000315"/>
    <property type="project" value="MGI"/>
</dbReference>
<dbReference type="GO" id="GO:0072574">
    <property type="term" value="P:hepatocyte proliferation"/>
    <property type="evidence" value="ECO:0000250"/>
    <property type="project" value="UniProtKB"/>
</dbReference>
<dbReference type="GO" id="GO:0050868">
    <property type="term" value="P:negative regulation of T cell activation"/>
    <property type="evidence" value="ECO:0000314"/>
    <property type="project" value="UniProtKB"/>
</dbReference>
<dbReference type="GO" id="GO:0010906">
    <property type="term" value="P:regulation of glucose metabolic process"/>
    <property type="evidence" value="ECO:0000315"/>
    <property type="project" value="MGI"/>
</dbReference>
<dbReference type="GO" id="GO:0050776">
    <property type="term" value="P:regulation of immune response"/>
    <property type="evidence" value="ECO:0000314"/>
    <property type="project" value="UniProtKB"/>
</dbReference>
<dbReference type="GO" id="GO:0035634">
    <property type="term" value="P:response to stilbenoid"/>
    <property type="evidence" value="ECO:0000270"/>
    <property type="project" value="UniProtKB"/>
</dbReference>
<dbReference type="CDD" id="cd00087">
    <property type="entry name" value="FReD"/>
    <property type="match status" value="1"/>
</dbReference>
<dbReference type="FunFam" id="3.90.215.10:FF:000013">
    <property type="entry name" value="Fibrinogen-like protein 1"/>
    <property type="match status" value="1"/>
</dbReference>
<dbReference type="Gene3D" id="3.90.215.10">
    <property type="entry name" value="Gamma Fibrinogen, chain A, domain 1"/>
    <property type="match status" value="1"/>
</dbReference>
<dbReference type="Gene3D" id="4.10.530.10">
    <property type="entry name" value="Gamma-fibrinogen Carboxyl Terminal Fragment, domain 2"/>
    <property type="match status" value="1"/>
</dbReference>
<dbReference type="InterPro" id="IPR037579">
    <property type="entry name" value="FIB_ANG-like"/>
</dbReference>
<dbReference type="InterPro" id="IPR036056">
    <property type="entry name" value="Fibrinogen-like_C"/>
</dbReference>
<dbReference type="InterPro" id="IPR014716">
    <property type="entry name" value="Fibrinogen_a/b/g_C_1"/>
</dbReference>
<dbReference type="InterPro" id="IPR002181">
    <property type="entry name" value="Fibrinogen_a/b/g_C_dom"/>
</dbReference>
<dbReference type="InterPro" id="IPR020837">
    <property type="entry name" value="Fibrinogen_CS"/>
</dbReference>
<dbReference type="NCBIfam" id="NF040941">
    <property type="entry name" value="GGGWT_bact"/>
    <property type="match status" value="1"/>
</dbReference>
<dbReference type="PANTHER" id="PTHR47221">
    <property type="entry name" value="FIBRINOGEN ALPHA CHAIN"/>
    <property type="match status" value="1"/>
</dbReference>
<dbReference type="PANTHER" id="PTHR47221:SF8">
    <property type="entry name" value="FIBRINOGEN LIKE 1A"/>
    <property type="match status" value="1"/>
</dbReference>
<dbReference type="Pfam" id="PF00147">
    <property type="entry name" value="Fibrinogen_C"/>
    <property type="match status" value="1"/>
</dbReference>
<dbReference type="SMART" id="SM00186">
    <property type="entry name" value="FBG"/>
    <property type="match status" value="1"/>
</dbReference>
<dbReference type="SUPFAM" id="SSF56496">
    <property type="entry name" value="Fibrinogen C-terminal domain-like"/>
    <property type="match status" value="1"/>
</dbReference>
<dbReference type="PROSITE" id="PS00514">
    <property type="entry name" value="FIBRINOGEN_C_1"/>
    <property type="match status" value="1"/>
</dbReference>
<dbReference type="PROSITE" id="PS51406">
    <property type="entry name" value="FIBRINOGEN_C_2"/>
    <property type="match status" value="1"/>
</dbReference>